<keyword id="KW-0046">Antibiotic resistance</keyword>
<keyword id="KW-0489">Methyltransferase</keyword>
<keyword id="KW-0694">RNA-binding</keyword>
<keyword id="KW-0949">S-adenosyl-L-methionine</keyword>
<keyword id="KW-0808">Transferase</keyword>
<comment type="function">
    <text>Involved in erythromycin resistance.</text>
</comment>
<comment type="subunit">
    <text>Homodimer.</text>
</comment>
<comment type="similarity">
    <text evidence="1">Belongs to the class I-like SAM-binding methyltransferase superfamily. rRNA adenine N(6)-methyltransferase family.</text>
</comment>
<dbReference type="EC" id="2.1.1.-" evidence="1"/>
<dbReference type="EMBL" id="L08389">
    <property type="protein sequence ID" value="AAA22597.1"/>
    <property type="molecule type" value="Genomic_DNA"/>
</dbReference>
<dbReference type="PIR" id="A47697">
    <property type="entry name" value="A47697"/>
</dbReference>
<dbReference type="RefSeq" id="WP_063844769.1">
    <property type="nucleotide sequence ID" value="NG_047819.1"/>
</dbReference>
<dbReference type="SMR" id="Q04720"/>
<dbReference type="CARD" id="ARO:3000495">
    <property type="molecule name" value="ErmD"/>
    <property type="mechanism identifier" value="ARO:0001001"/>
    <property type="mechanism name" value="antibiotic target alteration"/>
</dbReference>
<dbReference type="GO" id="GO:0003723">
    <property type="term" value="F:RNA binding"/>
    <property type="evidence" value="ECO:0007669"/>
    <property type="project" value="UniProtKB-KW"/>
</dbReference>
<dbReference type="GO" id="GO:0000179">
    <property type="term" value="F:rRNA (adenine-N6,N6-)-dimethyltransferase activity"/>
    <property type="evidence" value="ECO:0007669"/>
    <property type="project" value="InterPro"/>
</dbReference>
<dbReference type="GO" id="GO:0046677">
    <property type="term" value="P:response to antibiotic"/>
    <property type="evidence" value="ECO:0007669"/>
    <property type="project" value="UniProtKB-KW"/>
</dbReference>
<dbReference type="CDD" id="cd02440">
    <property type="entry name" value="AdoMet_MTases"/>
    <property type="match status" value="1"/>
</dbReference>
<dbReference type="Gene3D" id="1.10.8.100">
    <property type="entry name" value="Ribosomal RNA adenine dimethylase-like, domain 2"/>
    <property type="match status" value="1"/>
</dbReference>
<dbReference type="Gene3D" id="3.40.50.150">
    <property type="entry name" value="Vaccinia Virus protein VP39"/>
    <property type="match status" value="1"/>
</dbReference>
<dbReference type="InterPro" id="IPR001737">
    <property type="entry name" value="KsgA/Erm"/>
</dbReference>
<dbReference type="InterPro" id="IPR023165">
    <property type="entry name" value="rRNA_Ade_diMease-like_C"/>
</dbReference>
<dbReference type="InterPro" id="IPR020596">
    <property type="entry name" value="rRNA_Ade_Mease_Trfase_CS"/>
</dbReference>
<dbReference type="InterPro" id="IPR020598">
    <property type="entry name" value="rRNA_Ade_methylase_Trfase_N"/>
</dbReference>
<dbReference type="InterPro" id="IPR029063">
    <property type="entry name" value="SAM-dependent_MTases_sf"/>
</dbReference>
<dbReference type="NCBIfam" id="NF000499">
    <property type="entry name" value="Erm23S_rRNA_broad"/>
    <property type="match status" value="1"/>
</dbReference>
<dbReference type="PANTHER" id="PTHR11727">
    <property type="entry name" value="DIMETHYLADENOSINE TRANSFERASE"/>
    <property type="match status" value="1"/>
</dbReference>
<dbReference type="PANTHER" id="PTHR11727:SF7">
    <property type="entry name" value="DIMETHYLADENOSINE TRANSFERASE-RELATED"/>
    <property type="match status" value="1"/>
</dbReference>
<dbReference type="Pfam" id="PF00398">
    <property type="entry name" value="RrnaAD"/>
    <property type="match status" value="1"/>
</dbReference>
<dbReference type="SMART" id="SM00650">
    <property type="entry name" value="rADc"/>
    <property type="match status" value="1"/>
</dbReference>
<dbReference type="SUPFAM" id="SSF53335">
    <property type="entry name" value="S-adenosyl-L-methionine-dependent methyltransferases"/>
    <property type="match status" value="1"/>
</dbReference>
<dbReference type="PROSITE" id="PS01131">
    <property type="entry name" value="RRNA_A_DIMETH"/>
    <property type="match status" value="1"/>
</dbReference>
<dbReference type="PROSITE" id="PS51689">
    <property type="entry name" value="SAM_RNA_A_N6_MT"/>
    <property type="match status" value="1"/>
</dbReference>
<gene>
    <name type="primary">ermJ</name>
</gene>
<protein>
    <recommendedName>
        <fullName>rRNA adenine N-6-methyltransferase</fullName>
        <ecNumber evidence="1">2.1.1.-</ecNumber>
    </recommendedName>
    <alternativeName>
        <fullName>Erythromycin resistance protein</fullName>
    </alternativeName>
    <alternativeName>
        <fullName>Macrolide-lincosamide-streptogramin B resistance protein</fullName>
    </alternativeName>
</protein>
<accession>Q04720</accession>
<feature type="chain" id="PRO_0000101668" description="rRNA adenine N-6-methyltransferase">
    <location>
        <begin position="1"/>
        <end position="287"/>
    </location>
</feature>
<feature type="region of interest" description="Disordered" evidence="2">
    <location>
        <begin position="1"/>
        <end position="21"/>
    </location>
</feature>
<feature type="compositionally biased region" description="Basic residues" evidence="2">
    <location>
        <begin position="1"/>
        <end position="13"/>
    </location>
</feature>
<feature type="binding site" evidence="1">
    <location>
        <position position="25"/>
    </location>
    <ligand>
        <name>S-adenosyl-L-methionine</name>
        <dbReference type="ChEBI" id="CHEBI:59789"/>
    </ligand>
</feature>
<feature type="binding site" evidence="1">
    <location>
        <position position="27"/>
    </location>
    <ligand>
        <name>S-adenosyl-L-methionine</name>
        <dbReference type="ChEBI" id="CHEBI:59789"/>
    </ligand>
</feature>
<feature type="binding site" evidence="1">
    <location>
        <position position="52"/>
    </location>
    <ligand>
        <name>S-adenosyl-L-methionine</name>
        <dbReference type="ChEBI" id="CHEBI:59789"/>
    </ligand>
</feature>
<feature type="binding site" evidence="1">
    <location>
        <position position="73"/>
    </location>
    <ligand>
        <name>S-adenosyl-L-methionine</name>
        <dbReference type="ChEBI" id="CHEBI:59789"/>
    </ligand>
</feature>
<feature type="binding site" evidence="1">
    <location>
        <position position="98"/>
    </location>
    <ligand>
        <name>S-adenosyl-L-methionine</name>
        <dbReference type="ChEBI" id="CHEBI:59789"/>
    </ligand>
</feature>
<feature type="binding site" evidence="1">
    <location>
        <position position="114"/>
    </location>
    <ligand>
        <name>S-adenosyl-L-methionine</name>
        <dbReference type="ChEBI" id="CHEBI:59789"/>
    </ligand>
</feature>
<name>ERMJ_BACAN</name>
<organism>
    <name type="scientific">Bacillus anthracis</name>
    <dbReference type="NCBI Taxonomy" id="1392"/>
    <lineage>
        <taxon>Bacteria</taxon>
        <taxon>Bacillati</taxon>
        <taxon>Bacillota</taxon>
        <taxon>Bacilli</taxon>
        <taxon>Bacillales</taxon>
        <taxon>Bacillaceae</taxon>
        <taxon>Bacillus</taxon>
        <taxon>Bacillus cereus group</taxon>
    </lineage>
</organism>
<sequence>MKKKNHKYRGKKLNRGESPNFSGQHLMHNKKLIEEIVDRANISIDDTVLELGAGKGALTTVLSQKAGKVLAVENDSKFVDILTRKTAQHSNTKIIHQDIMKIHLPKEKFVVVSNIPYAITTPIMKMLLNNPASGFQKGIIVMEKGAAKRFTSKFIKNSYVLAWRMWFDIGIVREISKEHFSPPPKVDSAMVRITRKKDAPLSHKHYIAFRGLAEYALKEPNIPLCVRLRGIFTPRQMKHLRKSLKINNEKTVGTLTENQWAVIFNTMTQYVMHHKWPRANKRKPGEI</sequence>
<reference key="1">
    <citation type="journal article" date="1993" name="J. Gen. Microbiol.">
        <title>A macrolide-lincosamide-streptogramin B resistance determinant from Bacillus anthracis 590: cloning and expression of ermJ.</title>
        <authorList>
            <person name="Kim H.-S."/>
            <person name="Choi E.-C."/>
            <person name="Kim B.-K."/>
        </authorList>
    </citation>
    <scope>NUCLEOTIDE SEQUENCE [GENOMIC DNA]</scope>
    <source>
        <strain>590</strain>
    </source>
</reference>
<evidence type="ECO:0000255" key="1">
    <source>
        <dbReference type="PROSITE-ProRule" id="PRU01026"/>
    </source>
</evidence>
<evidence type="ECO:0000256" key="2">
    <source>
        <dbReference type="SAM" id="MobiDB-lite"/>
    </source>
</evidence>
<proteinExistence type="inferred from homology"/>